<organism>
    <name type="scientific">Listeria monocytogenes serotype 4a (strain HCC23)</name>
    <dbReference type="NCBI Taxonomy" id="552536"/>
    <lineage>
        <taxon>Bacteria</taxon>
        <taxon>Bacillati</taxon>
        <taxon>Bacillota</taxon>
        <taxon>Bacilli</taxon>
        <taxon>Bacillales</taxon>
        <taxon>Listeriaceae</taxon>
        <taxon>Listeria</taxon>
    </lineage>
</organism>
<gene>
    <name evidence="1" type="primary">leuC</name>
    <name type="ordered locus">LMHCC_0571</name>
</gene>
<reference key="1">
    <citation type="journal article" date="2011" name="J. Bacteriol.">
        <title>Genome sequence of lineage III Listeria monocytogenes strain HCC23.</title>
        <authorList>
            <person name="Steele C.L."/>
            <person name="Donaldson J.R."/>
            <person name="Paul D."/>
            <person name="Banes M.M."/>
            <person name="Arick T."/>
            <person name="Bridges S.M."/>
            <person name="Lawrence M.L."/>
        </authorList>
    </citation>
    <scope>NUCLEOTIDE SEQUENCE [LARGE SCALE GENOMIC DNA]</scope>
    <source>
        <strain>HCC23</strain>
    </source>
</reference>
<accession>B8DBU2</accession>
<dbReference type="EC" id="4.2.1.33" evidence="1"/>
<dbReference type="EMBL" id="CP001175">
    <property type="protein sequence ID" value="ACK38928.1"/>
    <property type="molecule type" value="Genomic_DNA"/>
</dbReference>
<dbReference type="RefSeq" id="WP_012581033.1">
    <property type="nucleotide sequence ID" value="NC_011660.1"/>
</dbReference>
<dbReference type="SMR" id="B8DBU2"/>
<dbReference type="KEGG" id="lmh:LMHCC_0571"/>
<dbReference type="HOGENOM" id="CLU_006714_3_4_9"/>
<dbReference type="UniPathway" id="UPA00048">
    <property type="reaction ID" value="UER00071"/>
</dbReference>
<dbReference type="GO" id="GO:0003861">
    <property type="term" value="F:3-isopropylmalate dehydratase activity"/>
    <property type="evidence" value="ECO:0007669"/>
    <property type="project" value="UniProtKB-UniRule"/>
</dbReference>
<dbReference type="GO" id="GO:0051539">
    <property type="term" value="F:4 iron, 4 sulfur cluster binding"/>
    <property type="evidence" value="ECO:0007669"/>
    <property type="project" value="UniProtKB-KW"/>
</dbReference>
<dbReference type="GO" id="GO:0046872">
    <property type="term" value="F:metal ion binding"/>
    <property type="evidence" value="ECO:0007669"/>
    <property type="project" value="UniProtKB-KW"/>
</dbReference>
<dbReference type="GO" id="GO:0009098">
    <property type="term" value="P:L-leucine biosynthetic process"/>
    <property type="evidence" value="ECO:0007669"/>
    <property type="project" value="UniProtKB-UniRule"/>
</dbReference>
<dbReference type="CDD" id="cd01583">
    <property type="entry name" value="IPMI"/>
    <property type="match status" value="1"/>
</dbReference>
<dbReference type="FunFam" id="3.30.499.10:FF:000007">
    <property type="entry name" value="3-isopropylmalate dehydratase large subunit"/>
    <property type="match status" value="1"/>
</dbReference>
<dbReference type="Gene3D" id="3.30.499.10">
    <property type="entry name" value="Aconitase, domain 3"/>
    <property type="match status" value="2"/>
</dbReference>
<dbReference type="HAMAP" id="MF_01026">
    <property type="entry name" value="LeuC_type1"/>
    <property type="match status" value="1"/>
</dbReference>
<dbReference type="InterPro" id="IPR004430">
    <property type="entry name" value="3-IsopropMal_deHydase_lsu"/>
</dbReference>
<dbReference type="InterPro" id="IPR015931">
    <property type="entry name" value="Acnase/IPM_dHydase_lsu_aba_1/3"/>
</dbReference>
<dbReference type="InterPro" id="IPR001030">
    <property type="entry name" value="Acoase/IPM_deHydtase_lsu_aba"/>
</dbReference>
<dbReference type="InterPro" id="IPR018136">
    <property type="entry name" value="Aconitase_4Fe-4S_BS"/>
</dbReference>
<dbReference type="InterPro" id="IPR036008">
    <property type="entry name" value="Aconitase_4Fe-4S_dom"/>
</dbReference>
<dbReference type="InterPro" id="IPR050067">
    <property type="entry name" value="IPM_dehydratase_rel_enz"/>
</dbReference>
<dbReference type="InterPro" id="IPR033941">
    <property type="entry name" value="IPMI_cat"/>
</dbReference>
<dbReference type="NCBIfam" id="TIGR00170">
    <property type="entry name" value="leuC"/>
    <property type="match status" value="1"/>
</dbReference>
<dbReference type="NCBIfam" id="NF004016">
    <property type="entry name" value="PRK05478.1"/>
    <property type="match status" value="1"/>
</dbReference>
<dbReference type="NCBIfam" id="NF009116">
    <property type="entry name" value="PRK12466.1"/>
    <property type="match status" value="1"/>
</dbReference>
<dbReference type="PANTHER" id="PTHR43822:SF9">
    <property type="entry name" value="3-ISOPROPYLMALATE DEHYDRATASE"/>
    <property type="match status" value="1"/>
</dbReference>
<dbReference type="PANTHER" id="PTHR43822">
    <property type="entry name" value="HOMOACONITASE, MITOCHONDRIAL-RELATED"/>
    <property type="match status" value="1"/>
</dbReference>
<dbReference type="Pfam" id="PF00330">
    <property type="entry name" value="Aconitase"/>
    <property type="match status" value="1"/>
</dbReference>
<dbReference type="PRINTS" id="PR00415">
    <property type="entry name" value="ACONITASE"/>
</dbReference>
<dbReference type="SUPFAM" id="SSF53732">
    <property type="entry name" value="Aconitase iron-sulfur domain"/>
    <property type="match status" value="1"/>
</dbReference>
<dbReference type="PROSITE" id="PS00450">
    <property type="entry name" value="ACONITASE_1"/>
    <property type="match status" value="1"/>
</dbReference>
<dbReference type="PROSITE" id="PS01244">
    <property type="entry name" value="ACONITASE_2"/>
    <property type="match status" value="1"/>
</dbReference>
<proteinExistence type="inferred from homology"/>
<protein>
    <recommendedName>
        <fullName evidence="1">3-isopropylmalate dehydratase large subunit</fullName>
        <ecNumber evidence="1">4.2.1.33</ecNumber>
    </recommendedName>
    <alternativeName>
        <fullName evidence="1">Alpha-IPM isomerase</fullName>
        <shortName evidence="1">IPMI</shortName>
    </alternativeName>
    <alternativeName>
        <fullName evidence="1">Isopropylmalate isomerase</fullName>
    </alternativeName>
</protein>
<name>LEUC_LISMH</name>
<keyword id="KW-0004">4Fe-4S</keyword>
<keyword id="KW-0028">Amino-acid biosynthesis</keyword>
<keyword id="KW-0100">Branched-chain amino acid biosynthesis</keyword>
<keyword id="KW-0408">Iron</keyword>
<keyword id="KW-0411">Iron-sulfur</keyword>
<keyword id="KW-0432">Leucine biosynthesis</keyword>
<keyword id="KW-0456">Lyase</keyword>
<keyword id="KW-0479">Metal-binding</keyword>
<sequence>MGKTLFDKLWNRHVIYGKEGEPQLLYVDLHLIHEVTSPQAFEGLRMENRPLRRPDKTFATMDHNVPTEDIFNIQDLVAKKQIEALQTNCEEFGVTLADMGSDRQGIVHMVGPETGLTQPGKVIVCGDSHTATHGAFGAIGFGIGSSEVEHVFATQTIWQQKPKSMGIEINGKLPKGVYAKDIILHLIATYGVAFGTGYAVEYYGETIRNMSMEERMTICNMAIEGGAKMGMMAPDETTFEYVRGREYAPADMEKAIRDWKTLQTDPDAEYDLHIEMDASILEPYVTWGTNPEMGVPFSKAFPEIKDMNYERAYEYMGLKPGQTAEEIELGYVFIGSCTNARLSDLEEAARIVKGNKVKNNIRALVVPGSRQVRNAAESIGLDKIFIEAGFEWREPGCSMCLGMNPDQVPDGVHCASTSNRNFEGRQGKGARTHLVSPAMAAAAAINGHFIDIRKEAIISGGN</sequence>
<evidence type="ECO:0000255" key="1">
    <source>
        <dbReference type="HAMAP-Rule" id="MF_01026"/>
    </source>
</evidence>
<comment type="function">
    <text evidence="1">Catalyzes the isomerization between 2-isopropylmalate and 3-isopropylmalate, via the formation of 2-isopropylmaleate.</text>
</comment>
<comment type="catalytic activity">
    <reaction evidence="1">
        <text>(2R,3S)-3-isopropylmalate = (2S)-2-isopropylmalate</text>
        <dbReference type="Rhea" id="RHEA:32287"/>
        <dbReference type="ChEBI" id="CHEBI:1178"/>
        <dbReference type="ChEBI" id="CHEBI:35121"/>
        <dbReference type="EC" id="4.2.1.33"/>
    </reaction>
</comment>
<comment type="cofactor">
    <cofactor evidence="1">
        <name>[4Fe-4S] cluster</name>
        <dbReference type="ChEBI" id="CHEBI:49883"/>
    </cofactor>
    <text evidence="1">Binds 1 [4Fe-4S] cluster per subunit.</text>
</comment>
<comment type="pathway">
    <text evidence="1">Amino-acid biosynthesis; L-leucine biosynthesis; L-leucine from 3-methyl-2-oxobutanoate: step 2/4.</text>
</comment>
<comment type="subunit">
    <text evidence="1">Heterodimer of LeuC and LeuD.</text>
</comment>
<comment type="similarity">
    <text evidence="1">Belongs to the aconitase/IPM isomerase family. LeuC type 1 subfamily.</text>
</comment>
<feature type="chain" id="PRO_1000149367" description="3-isopropylmalate dehydratase large subunit">
    <location>
        <begin position="1"/>
        <end position="462"/>
    </location>
</feature>
<feature type="binding site" evidence="1">
    <location>
        <position position="337"/>
    </location>
    <ligand>
        <name>[4Fe-4S] cluster</name>
        <dbReference type="ChEBI" id="CHEBI:49883"/>
    </ligand>
</feature>
<feature type="binding site" evidence="1">
    <location>
        <position position="397"/>
    </location>
    <ligand>
        <name>[4Fe-4S] cluster</name>
        <dbReference type="ChEBI" id="CHEBI:49883"/>
    </ligand>
</feature>
<feature type="binding site" evidence="1">
    <location>
        <position position="400"/>
    </location>
    <ligand>
        <name>[4Fe-4S] cluster</name>
        <dbReference type="ChEBI" id="CHEBI:49883"/>
    </ligand>
</feature>